<organism>
    <name type="scientific">Homo sapiens</name>
    <name type="common">Human</name>
    <dbReference type="NCBI Taxonomy" id="9606"/>
    <lineage>
        <taxon>Eukaryota</taxon>
        <taxon>Metazoa</taxon>
        <taxon>Chordata</taxon>
        <taxon>Craniata</taxon>
        <taxon>Vertebrata</taxon>
        <taxon>Euteleostomi</taxon>
        <taxon>Mammalia</taxon>
        <taxon>Eutheria</taxon>
        <taxon>Euarchontoglires</taxon>
        <taxon>Primates</taxon>
        <taxon>Haplorrhini</taxon>
        <taxon>Catarrhini</taxon>
        <taxon>Hominidae</taxon>
        <taxon>Homo</taxon>
    </lineage>
</organism>
<name>LRC53_HUMAN</name>
<sequence length="1247" mass="140742">MLRLVAACPESCVVCTKDVTLCHQLTYIVAAPMTTRVLIITDGYLSSIESTNLSLLFNLALLSLSRNGIEDVQEDALHGLTMLRTLLLEHNQISSSSLTDHTFSKLHSLQVLVLSNNALRTLRGSWFRNTSGLTRLQLDGNQITNLTDSSFGGTNLHSLRYLDLSNNFISYIGKDAFRPLPQLQEVDLSRNRLAHMPDVFTPLKQLILLSLDKNQWSCTCDLHPLARFLRNYIKSSAHTLRNAKDLNCQPSTAAVAAAQSVLRLSETNCDSKAPNFTLVLKDRSPLLPGPDVALLTVLGFAGAVGLTCLGLVVFNWKLHQGKANEHTSENLCCRTFDEPLCAHEARNYHTKGYCNCHLTQENEIKVMSTVGSRKEMPLLQENSHQATSASESATLDGSFRNLKKKDRGVGSTLFCQDGRLLHSECSEPPGNMRAFNEAGLLTTYNPRKVQKLWNLEPGEVQPQTLQHHIIRTEDISSDIFRRRYATPASALAGESLEKRLTNESWQPPIEKEDNGLHPHRQRHFITSSSSKPCEPEEHYVQKIVQKNRSKYDDPCGLLKQSKPRYFQPNNSLICKYVPCEQFEDYMKEKKPNRRQHSKPEKEQIQINSAIEKFLMSEDNIDLSGLSTKTKKAYSPKRVIFHDPDLVEINRSMMSPKISTPWKRQKNQSNQLTKLDVKKFSNTGERNKGEKWFTNSWVLKRKRTPQSDLKGKIKGQNLKLNLHPFRKVRVHPEKSLSSLPKQCKQVLLPPKKLSKTSETEAKINTVCSADFLQQSESSNYVRLTSKRLPLKHDSKQTPYYQRNTKRAPLLSANNLRVVNQSSIESSCYSAGHIPDGNTSKLPQPTPTDAEHRHSHSQFSTEQMEDATQLESKVLSYLATTWENTGSDVLPFQHSRRATDQGTTESTEHMGQNVSKTSELNQFSLSPRNQTQLLDAHKTDSYNKEYTLDQNEALQHREQNSSHAQLENKEKTLMTKPQISHQIVENCIMDKEENDVEKKLSKTETYDSSLIPQTQSKNNLSFMKTNSIPYQNRIELPKDISTSPVSSQAVWHLTNSSEKGIDSTNALPRNDGTEALEIKIVGKEEKNMLDESKTDSSMLTQISQMTLKGITKERQQTWENGTSEKYILHDASSAEETITAKDLSITSSHETQNRILCSEVDPEVNSNVHNFREVQNIQPDKDSAHKEGAMTVETHEALSFLPGLKDSFEAENEVFLVPSRINEAENSAPKPVLYPPSAEYATTSPLETE</sequence>
<proteinExistence type="predicted"/>
<feature type="chain" id="PRO_0000317367" description="Leucine-rich repeat-containing protein 53">
    <location>
        <begin position="1"/>
        <end position="1247"/>
    </location>
</feature>
<feature type="transmembrane region" description="Helical" evidence="1">
    <location>
        <begin position="294"/>
        <end position="314"/>
    </location>
</feature>
<feature type="repeat" description="LRR 1">
    <location>
        <begin position="34"/>
        <end position="55"/>
    </location>
</feature>
<feature type="repeat" description="LRR 2">
    <location>
        <begin position="58"/>
        <end position="79"/>
    </location>
</feature>
<feature type="repeat" description="LRR 3">
    <location>
        <begin position="82"/>
        <end position="102"/>
    </location>
</feature>
<feature type="repeat" description="LRR 4">
    <location>
        <begin position="108"/>
        <end position="129"/>
    </location>
</feature>
<feature type="repeat" description="LRR 5">
    <location>
        <begin position="132"/>
        <end position="153"/>
    </location>
</feature>
<feature type="repeat" description="LRR 6">
    <location>
        <begin position="158"/>
        <end position="179"/>
    </location>
</feature>
<feature type="repeat" description="LRR 7">
    <location>
        <begin position="182"/>
        <end position="203"/>
    </location>
</feature>
<feature type="domain" description="LRRCT">
    <location>
        <begin position="214"/>
        <end position="271"/>
    </location>
</feature>
<feature type="region of interest" description="Disordered" evidence="2">
    <location>
        <begin position="828"/>
        <end position="866"/>
    </location>
</feature>
<feature type="region of interest" description="Disordered" evidence="2">
    <location>
        <begin position="887"/>
        <end position="927"/>
    </location>
</feature>
<feature type="region of interest" description="Disordered" evidence="2">
    <location>
        <begin position="1223"/>
        <end position="1247"/>
    </location>
</feature>
<feature type="compositionally biased region" description="Polar residues" evidence="2">
    <location>
        <begin position="898"/>
        <end position="927"/>
    </location>
</feature>
<feature type="compositionally biased region" description="Polar residues" evidence="2">
    <location>
        <begin position="1238"/>
        <end position="1247"/>
    </location>
</feature>
<reference key="1">
    <citation type="journal article" date="2006" name="Nature">
        <title>The DNA sequence and biological annotation of human chromosome 1.</title>
        <authorList>
            <person name="Gregory S.G."/>
            <person name="Barlow K.F."/>
            <person name="McLay K.E."/>
            <person name="Kaul R."/>
            <person name="Swarbreck D."/>
            <person name="Dunham A."/>
            <person name="Scott C.E."/>
            <person name="Howe K.L."/>
            <person name="Woodfine K."/>
            <person name="Spencer C.C.A."/>
            <person name="Jones M.C."/>
            <person name="Gillson C."/>
            <person name="Searle S."/>
            <person name="Zhou Y."/>
            <person name="Kokocinski F."/>
            <person name="McDonald L."/>
            <person name="Evans R."/>
            <person name="Phillips K."/>
            <person name="Atkinson A."/>
            <person name="Cooper R."/>
            <person name="Jones C."/>
            <person name="Hall R.E."/>
            <person name="Andrews T.D."/>
            <person name="Lloyd C."/>
            <person name="Ainscough R."/>
            <person name="Almeida J.P."/>
            <person name="Ambrose K.D."/>
            <person name="Anderson F."/>
            <person name="Andrew R.W."/>
            <person name="Ashwell R.I.S."/>
            <person name="Aubin K."/>
            <person name="Babbage A.K."/>
            <person name="Bagguley C.L."/>
            <person name="Bailey J."/>
            <person name="Beasley H."/>
            <person name="Bethel G."/>
            <person name="Bird C.P."/>
            <person name="Bray-Allen S."/>
            <person name="Brown J.Y."/>
            <person name="Brown A.J."/>
            <person name="Buckley D."/>
            <person name="Burton J."/>
            <person name="Bye J."/>
            <person name="Carder C."/>
            <person name="Chapman J.C."/>
            <person name="Clark S.Y."/>
            <person name="Clarke G."/>
            <person name="Clee C."/>
            <person name="Cobley V."/>
            <person name="Collier R.E."/>
            <person name="Corby N."/>
            <person name="Coville G.J."/>
            <person name="Davies J."/>
            <person name="Deadman R."/>
            <person name="Dunn M."/>
            <person name="Earthrowl M."/>
            <person name="Ellington A.G."/>
            <person name="Errington H."/>
            <person name="Frankish A."/>
            <person name="Frankland J."/>
            <person name="French L."/>
            <person name="Garner P."/>
            <person name="Garnett J."/>
            <person name="Gay L."/>
            <person name="Ghori M.R.J."/>
            <person name="Gibson R."/>
            <person name="Gilby L.M."/>
            <person name="Gillett W."/>
            <person name="Glithero R.J."/>
            <person name="Grafham D.V."/>
            <person name="Griffiths C."/>
            <person name="Griffiths-Jones S."/>
            <person name="Grocock R."/>
            <person name="Hammond S."/>
            <person name="Harrison E.S.I."/>
            <person name="Hart E."/>
            <person name="Haugen E."/>
            <person name="Heath P.D."/>
            <person name="Holmes S."/>
            <person name="Holt K."/>
            <person name="Howden P.J."/>
            <person name="Hunt A.R."/>
            <person name="Hunt S.E."/>
            <person name="Hunter G."/>
            <person name="Isherwood J."/>
            <person name="James R."/>
            <person name="Johnson C."/>
            <person name="Johnson D."/>
            <person name="Joy A."/>
            <person name="Kay M."/>
            <person name="Kershaw J.K."/>
            <person name="Kibukawa M."/>
            <person name="Kimberley A.M."/>
            <person name="King A."/>
            <person name="Knights A.J."/>
            <person name="Lad H."/>
            <person name="Laird G."/>
            <person name="Lawlor S."/>
            <person name="Leongamornlert D.A."/>
            <person name="Lloyd D.M."/>
            <person name="Loveland J."/>
            <person name="Lovell J."/>
            <person name="Lush M.J."/>
            <person name="Lyne R."/>
            <person name="Martin S."/>
            <person name="Mashreghi-Mohammadi M."/>
            <person name="Matthews L."/>
            <person name="Matthews N.S.W."/>
            <person name="McLaren S."/>
            <person name="Milne S."/>
            <person name="Mistry S."/>
            <person name="Moore M.J.F."/>
            <person name="Nickerson T."/>
            <person name="O'Dell C.N."/>
            <person name="Oliver K."/>
            <person name="Palmeiri A."/>
            <person name="Palmer S.A."/>
            <person name="Parker A."/>
            <person name="Patel D."/>
            <person name="Pearce A.V."/>
            <person name="Peck A.I."/>
            <person name="Pelan S."/>
            <person name="Phelps K."/>
            <person name="Phillimore B.J."/>
            <person name="Plumb R."/>
            <person name="Rajan J."/>
            <person name="Raymond C."/>
            <person name="Rouse G."/>
            <person name="Saenphimmachak C."/>
            <person name="Sehra H.K."/>
            <person name="Sheridan E."/>
            <person name="Shownkeen R."/>
            <person name="Sims S."/>
            <person name="Skuce C.D."/>
            <person name="Smith M."/>
            <person name="Steward C."/>
            <person name="Subramanian S."/>
            <person name="Sycamore N."/>
            <person name="Tracey A."/>
            <person name="Tromans A."/>
            <person name="Van Helmond Z."/>
            <person name="Wall M."/>
            <person name="Wallis J.M."/>
            <person name="White S."/>
            <person name="Whitehead S.L."/>
            <person name="Wilkinson J.E."/>
            <person name="Willey D.L."/>
            <person name="Williams H."/>
            <person name="Wilming L."/>
            <person name="Wray P.W."/>
            <person name="Wu Z."/>
            <person name="Coulson A."/>
            <person name="Vaudin M."/>
            <person name="Sulston J.E."/>
            <person name="Durbin R.M."/>
            <person name="Hubbard T."/>
            <person name="Wooster R."/>
            <person name="Dunham I."/>
            <person name="Carter N.P."/>
            <person name="McVean G."/>
            <person name="Ross M.T."/>
            <person name="Harrow J."/>
            <person name="Olson M.V."/>
            <person name="Beck S."/>
            <person name="Rogers J."/>
            <person name="Bentley D.R."/>
        </authorList>
    </citation>
    <scope>NUCLEOTIDE SEQUENCE [LARGE SCALE GENOMIC DNA]</scope>
</reference>
<gene>
    <name type="primary">LRRC53</name>
</gene>
<dbReference type="EMBL" id="AC105271">
    <property type="status" value="NOT_ANNOTATED_CDS"/>
    <property type="molecule type" value="Genomic_DNA"/>
</dbReference>
<dbReference type="CCDS" id="CCDS90978.1"/>
<dbReference type="RefSeq" id="NP_001369209.1">
    <property type="nucleotide sequence ID" value="NM_001382280.1"/>
</dbReference>
<dbReference type="RefSeq" id="XP_016858569.1">
    <property type="nucleotide sequence ID" value="XM_017003080.1"/>
</dbReference>
<dbReference type="SMR" id="A6NM62"/>
<dbReference type="FunCoup" id="A6NM62">
    <property type="interactions" value="19"/>
</dbReference>
<dbReference type="STRING" id="9606.ENSP00000294635"/>
<dbReference type="GlyGen" id="A6NM62">
    <property type="glycosylation" value="3 sites"/>
</dbReference>
<dbReference type="iPTMnet" id="A6NM62"/>
<dbReference type="PhosphoSitePlus" id="A6NM62"/>
<dbReference type="BioMuta" id="LRRC53"/>
<dbReference type="jPOST" id="A6NM62"/>
<dbReference type="MassIVE" id="A6NM62"/>
<dbReference type="PaxDb" id="9606-ENSP00000294635"/>
<dbReference type="PeptideAtlas" id="A6NM62"/>
<dbReference type="ProteomicsDB" id="1517"/>
<dbReference type="Antibodypedia" id="66009">
    <property type="antibodies" value="2 antibodies from 2 providers"/>
</dbReference>
<dbReference type="Ensembl" id="ENST00000294635.5">
    <property type="protein sequence ID" value="ENSP00000294635.4"/>
    <property type="gene ID" value="ENSG00000162621.7"/>
</dbReference>
<dbReference type="GeneID" id="105378803"/>
<dbReference type="MANE-Select" id="ENST00000294635.5">
    <property type="protein sequence ID" value="ENSP00000294635.4"/>
    <property type="RefSeq nucleotide sequence ID" value="NM_001382280.1"/>
    <property type="RefSeq protein sequence ID" value="NP_001369209.1"/>
</dbReference>
<dbReference type="UCSC" id="uc057hqj.1">
    <property type="organism name" value="human"/>
</dbReference>
<dbReference type="AGR" id="HGNC:25255"/>
<dbReference type="GeneCards" id="LRRC53"/>
<dbReference type="HGNC" id="HGNC:25255">
    <property type="gene designation" value="LRRC53"/>
</dbReference>
<dbReference type="HPA" id="ENSG00000162621">
    <property type="expression patterns" value="Not detected"/>
</dbReference>
<dbReference type="MalaCards" id="LRRC53"/>
<dbReference type="neXtProt" id="NX_A6NM62"/>
<dbReference type="VEuPathDB" id="HostDB:ENSG00000162621"/>
<dbReference type="eggNOG" id="KOG0619">
    <property type="taxonomic scope" value="Eukaryota"/>
</dbReference>
<dbReference type="GeneTree" id="ENSGT00940000161095"/>
<dbReference type="HOGENOM" id="CLU_280737_0_0_1"/>
<dbReference type="InParanoid" id="A6NM62"/>
<dbReference type="OMA" id="NSIPFQN"/>
<dbReference type="OrthoDB" id="676979at2759"/>
<dbReference type="PAN-GO" id="A6NM62">
    <property type="GO annotations" value="1 GO annotation based on evolutionary models"/>
</dbReference>
<dbReference type="PhylomeDB" id="A6NM62"/>
<dbReference type="TreeFam" id="TF341942"/>
<dbReference type="PathwayCommons" id="A6NM62"/>
<dbReference type="SignaLink" id="A6NM62"/>
<dbReference type="BioGRID-ORCS" id="105378803">
    <property type="hits" value="2 hits in 145 CRISPR screens"/>
</dbReference>
<dbReference type="Pharos" id="A6NM62">
    <property type="development level" value="Tdark"/>
</dbReference>
<dbReference type="PRO" id="PR:A6NM62"/>
<dbReference type="Proteomes" id="UP000005640">
    <property type="component" value="Chromosome 1"/>
</dbReference>
<dbReference type="RNAct" id="A6NM62">
    <property type="molecule type" value="protein"/>
</dbReference>
<dbReference type="Bgee" id="ENSG00000162621">
    <property type="expression patterns" value="Expressed in male germ line stem cell (sensu Vertebrata) in testis and 17 other cell types or tissues"/>
</dbReference>
<dbReference type="GO" id="GO:0005886">
    <property type="term" value="C:plasma membrane"/>
    <property type="evidence" value="ECO:0000318"/>
    <property type="project" value="GO_Central"/>
</dbReference>
<dbReference type="Gene3D" id="3.80.10.10">
    <property type="entry name" value="Ribonuclease Inhibitor"/>
    <property type="match status" value="2"/>
</dbReference>
<dbReference type="InterPro" id="IPR001611">
    <property type="entry name" value="Leu-rich_rpt"/>
</dbReference>
<dbReference type="InterPro" id="IPR003591">
    <property type="entry name" value="Leu-rich_rpt_typical-subtyp"/>
</dbReference>
<dbReference type="InterPro" id="IPR032675">
    <property type="entry name" value="LRR_dom_sf"/>
</dbReference>
<dbReference type="InterPro" id="IPR050541">
    <property type="entry name" value="LRR_TM_domain-containing"/>
</dbReference>
<dbReference type="PANTHER" id="PTHR24369">
    <property type="entry name" value="ANTIGEN BSP, PUTATIVE-RELATED"/>
    <property type="match status" value="1"/>
</dbReference>
<dbReference type="PANTHER" id="PTHR24369:SF161">
    <property type="entry name" value="LEUCINE-RICH REPEAT-CONTAINING PROTEIN 53"/>
    <property type="match status" value="1"/>
</dbReference>
<dbReference type="Pfam" id="PF13855">
    <property type="entry name" value="LRR_8"/>
    <property type="match status" value="2"/>
</dbReference>
<dbReference type="SMART" id="SM00369">
    <property type="entry name" value="LRR_TYP"/>
    <property type="match status" value="6"/>
</dbReference>
<dbReference type="SUPFAM" id="SSF52058">
    <property type="entry name" value="L domain-like"/>
    <property type="match status" value="1"/>
</dbReference>
<dbReference type="PROSITE" id="PS51450">
    <property type="entry name" value="LRR"/>
    <property type="match status" value="7"/>
</dbReference>
<keyword id="KW-0433">Leucine-rich repeat</keyword>
<keyword id="KW-0472">Membrane</keyword>
<keyword id="KW-1185">Reference proteome</keyword>
<keyword id="KW-0677">Repeat</keyword>
<keyword id="KW-0812">Transmembrane</keyword>
<keyword id="KW-1133">Transmembrane helix</keyword>
<evidence type="ECO:0000255" key="1"/>
<evidence type="ECO:0000256" key="2">
    <source>
        <dbReference type="SAM" id="MobiDB-lite"/>
    </source>
</evidence>
<evidence type="ECO:0000305" key="3"/>
<accession>A6NM62</accession>
<comment type="subcellular location">
    <subcellularLocation>
        <location evidence="3">Membrane</location>
        <topology evidence="3">Single-pass membrane protein</topology>
    </subcellularLocation>
</comment>
<protein>
    <recommendedName>
        <fullName>Leucine-rich repeat-containing protein 53</fullName>
    </recommendedName>
</protein>